<evidence type="ECO:0000255" key="1">
    <source>
        <dbReference type="HAMAP-Rule" id="MF_00502"/>
    </source>
</evidence>
<evidence type="ECO:0000305" key="2"/>
<gene>
    <name evidence="1" type="primary">rpmE2</name>
    <name type="ordered locus">SNSL254_A0519</name>
</gene>
<comment type="subunit">
    <text evidence="1">Part of the 50S ribosomal subunit.</text>
</comment>
<comment type="similarity">
    <text evidence="1">Belongs to the bacterial ribosomal protein bL31 family. Type B subfamily.</text>
</comment>
<keyword id="KW-0687">Ribonucleoprotein</keyword>
<keyword id="KW-0689">Ribosomal protein</keyword>
<feature type="chain" id="PRO_1000126836" description="Large ribosomal subunit protein bL31B">
    <location>
        <begin position="1"/>
        <end position="86"/>
    </location>
</feature>
<dbReference type="EMBL" id="CP001113">
    <property type="protein sequence ID" value="ACF64078.1"/>
    <property type="molecule type" value="Genomic_DNA"/>
</dbReference>
<dbReference type="RefSeq" id="WP_000801415.1">
    <property type="nucleotide sequence ID" value="NZ_CCMR01000003.1"/>
</dbReference>
<dbReference type="SMR" id="B4SWW2"/>
<dbReference type="KEGG" id="see:SNSL254_A0519"/>
<dbReference type="HOGENOM" id="CLU_114306_2_1_6"/>
<dbReference type="Proteomes" id="UP000008824">
    <property type="component" value="Chromosome"/>
</dbReference>
<dbReference type="GO" id="GO:1990904">
    <property type="term" value="C:ribonucleoprotein complex"/>
    <property type="evidence" value="ECO:0007669"/>
    <property type="project" value="UniProtKB-KW"/>
</dbReference>
<dbReference type="GO" id="GO:0005840">
    <property type="term" value="C:ribosome"/>
    <property type="evidence" value="ECO:0007669"/>
    <property type="project" value="UniProtKB-KW"/>
</dbReference>
<dbReference type="GO" id="GO:0003735">
    <property type="term" value="F:structural constituent of ribosome"/>
    <property type="evidence" value="ECO:0007669"/>
    <property type="project" value="InterPro"/>
</dbReference>
<dbReference type="GO" id="GO:0006412">
    <property type="term" value="P:translation"/>
    <property type="evidence" value="ECO:0007669"/>
    <property type="project" value="UniProtKB-UniRule"/>
</dbReference>
<dbReference type="Gene3D" id="4.10.830.30">
    <property type="entry name" value="Ribosomal protein L31"/>
    <property type="match status" value="1"/>
</dbReference>
<dbReference type="HAMAP" id="MF_00502">
    <property type="entry name" value="Ribosomal_bL31_2"/>
    <property type="match status" value="1"/>
</dbReference>
<dbReference type="InterPro" id="IPR034704">
    <property type="entry name" value="Ribosomal_bL28/bL31-like_sf"/>
</dbReference>
<dbReference type="InterPro" id="IPR002150">
    <property type="entry name" value="Ribosomal_bL31"/>
</dbReference>
<dbReference type="InterPro" id="IPR027493">
    <property type="entry name" value="Ribosomal_bL31_B"/>
</dbReference>
<dbReference type="InterPro" id="IPR042105">
    <property type="entry name" value="Ribosomal_bL31_sf"/>
</dbReference>
<dbReference type="NCBIfam" id="TIGR00105">
    <property type="entry name" value="L31"/>
    <property type="match status" value="1"/>
</dbReference>
<dbReference type="NCBIfam" id="NF002462">
    <property type="entry name" value="PRK01678.1"/>
    <property type="match status" value="1"/>
</dbReference>
<dbReference type="PANTHER" id="PTHR33280">
    <property type="entry name" value="50S RIBOSOMAL PROTEIN L31, CHLOROPLASTIC"/>
    <property type="match status" value="1"/>
</dbReference>
<dbReference type="PANTHER" id="PTHR33280:SF1">
    <property type="entry name" value="LARGE RIBOSOMAL SUBUNIT PROTEIN BL31C"/>
    <property type="match status" value="1"/>
</dbReference>
<dbReference type="Pfam" id="PF01197">
    <property type="entry name" value="Ribosomal_L31"/>
    <property type="match status" value="1"/>
</dbReference>
<dbReference type="PRINTS" id="PR01249">
    <property type="entry name" value="RIBOSOMALL31"/>
</dbReference>
<dbReference type="SUPFAM" id="SSF143800">
    <property type="entry name" value="L28p-like"/>
    <property type="match status" value="1"/>
</dbReference>
<proteinExistence type="inferred from homology"/>
<organism>
    <name type="scientific">Salmonella newport (strain SL254)</name>
    <dbReference type="NCBI Taxonomy" id="423368"/>
    <lineage>
        <taxon>Bacteria</taxon>
        <taxon>Pseudomonadati</taxon>
        <taxon>Pseudomonadota</taxon>
        <taxon>Gammaproteobacteria</taxon>
        <taxon>Enterobacterales</taxon>
        <taxon>Enterobacteriaceae</taxon>
        <taxon>Salmonella</taxon>
    </lineage>
</organism>
<sequence>MKPDIHPVYRTVVFHDTSANEYVKVGSTIKTEREIELDGVTYPYVTIDVSSKSHPFYTGRQKTFDSESSAARFQKRFGHFIGAKRG</sequence>
<accession>B4SWW2</accession>
<protein>
    <recommendedName>
        <fullName evidence="1">Large ribosomal subunit protein bL31B</fullName>
    </recommendedName>
    <alternativeName>
        <fullName evidence="2">50S ribosomal protein L31 type B</fullName>
    </alternativeName>
</protein>
<name>RL31B_SALNS</name>
<reference key="1">
    <citation type="journal article" date="2011" name="J. Bacteriol.">
        <title>Comparative genomics of 28 Salmonella enterica isolates: evidence for CRISPR-mediated adaptive sublineage evolution.</title>
        <authorList>
            <person name="Fricke W.F."/>
            <person name="Mammel M.K."/>
            <person name="McDermott P.F."/>
            <person name="Tartera C."/>
            <person name="White D.G."/>
            <person name="Leclerc J.E."/>
            <person name="Ravel J."/>
            <person name="Cebula T.A."/>
        </authorList>
    </citation>
    <scope>NUCLEOTIDE SEQUENCE [LARGE SCALE GENOMIC DNA]</scope>
    <source>
        <strain>SL254</strain>
    </source>
</reference>